<organism>
    <name type="scientific">Rhodococcus jostii (strain RHA1)</name>
    <dbReference type="NCBI Taxonomy" id="101510"/>
    <lineage>
        <taxon>Bacteria</taxon>
        <taxon>Bacillati</taxon>
        <taxon>Actinomycetota</taxon>
        <taxon>Actinomycetes</taxon>
        <taxon>Mycobacteriales</taxon>
        <taxon>Nocardiaceae</taxon>
        <taxon>Rhodococcus</taxon>
    </lineage>
</organism>
<feature type="chain" id="PRO_0000397014" description="Proteasome-associated ATPase">
    <location>
        <begin position="1"/>
        <end position="591"/>
    </location>
</feature>
<feature type="region of interest" description="Docks into pockets in the proteasome alpha-ring" evidence="1">
    <location>
        <begin position="590"/>
        <end position="591"/>
    </location>
</feature>
<feature type="coiled-coil region" evidence="1">
    <location>
        <begin position="8"/>
        <end position="77"/>
    </location>
</feature>
<feature type="binding site" evidence="1">
    <location>
        <begin position="278"/>
        <end position="283"/>
    </location>
    <ligand>
        <name>ATP</name>
        <dbReference type="ChEBI" id="CHEBI:30616"/>
    </ligand>
</feature>
<keyword id="KW-0067">ATP-binding</keyword>
<keyword id="KW-0143">Chaperone</keyword>
<keyword id="KW-0175">Coiled coil</keyword>
<keyword id="KW-0547">Nucleotide-binding</keyword>
<keyword id="KW-0647">Proteasome</keyword>
<proteinExistence type="inferred from homology"/>
<dbReference type="EMBL" id="CP000431">
    <property type="protein sequence ID" value="ABG92682.1"/>
    <property type="molecule type" value="Genomic_DNA"/>
</dbReference>
<dbReference type="RefSeq" id="WP_009473521.1">
    <property type="nucleotide sequence ID" value="NC_008268.1"/>
</dbReference>
<dbReference type="SMR" id="Q0SIF4"/>
<dbReference type="KEGG" id="rha:RHA1_ro00849"/>
<dbReference type="eggNOG" id="COG1222">
    <property type="taxonomic scope" value="Bacteria"/>
</dbReference>
<dbReference type="HOGENOM" id="CLU_036054_0_0_11"/>
<dbReference type="OrthoDB" id="9809379at2"/>
<dbReference type="UniPathway" id="UPA00997"/>
<dbReference type="Proteomes" id="UP000008710">
    <property type="component" value="Chromosome"/>
</dbReference>
<dbReference type="GO" id="GO:0000502">
    <property type="term" value="C:proteasome complex"/>
    <property type="evidence" value="ECO:0007669"/>
    <property type="project" value="UniProtKB-KW"/>
</dbReference>
<dbReference type="GO" id="GO:0005524">
    <property type="term" value="F:ATP binding"/>
    <property type="evidence" value="ECO:0007669"/>
    <property type="project" value="UniProtKB-UniRule"/>
</dbReference>
<dbReference type="GO" id="GO:0016887">
    <property type="term" value="F:ATP hydrolysis activity"/>
    <property type="evidence" value="ECO:0007669"/>
    <property type="project" value="UniProtKB-UniRule"/>
</dbReference>
<dbReference type="GO" id="GO:0019941">
    <property type="term" value="P:modification-dependent protein catabolic process"/>
    <property type="evidence" value="ECO:0007669"/>
    <property type="project" value="InterPro"/>
</dbReference>
<dbReference type="GO" id="GO:0010498">
    <property type="term" value="P:proteasomal protein catabolic process"/>
    <property type="evidence" value="ECO:0007669"/>
    <property type="project" value="InterPro"/>
</dbReference>
<dbReference type="FunFam" id="1.20.5.170:FF:000018">
    <property type="entry name" value="AAA ATPase forming ring-shaped complexes"/>
    <property type="match status" value="1"/>
</dbReference>
<dbReference type="FunFam" id="2.40.50.140:FF:000169">
    <property type="entry name" value="AAA ATPase forming ring-shaped complexes"/>
    <property type="match status" value="1"/>
</dbReference>
<dbReference type="FunFam" id="3.40.50.300:FF:000155">
    <property type="entry name" value="AAA ATPase forming ring-shaped complexes"/>
    <property type="match status" value="1"/>
</dbReference>
<dbReference type="Gene3D" id="1.10.8.60">
    <property type="match status" value="1"/>
</dbReference>
<dbReference type="Gene3D" id="1.20.5.170">
    <property type="match status" value="1"/>
</dbReference>
<dbReference type="Gene3D" id="2.40.50.140">
    <property type="entry name" value="Nucleic acid-binding proteins"/>
    <property type="match status" value="2"/>
</dbReference>
<dbReference type="Gene3D" id="3.40.50.300">
    <property type="entry name" value="P-loop containing nucleotide triphosphate hydrolases"/>
    <property type="match status" value="1"/>
</dbReference>
<dbReference type="HAMAP" id="MF_02112">
    <property type="entry name" value="ARC_ATPase"/>
    <property type="match status" value="1"/>
</dbReference>
<dbReference type="InterPro" id="IPR003593">
    <property type="entry name" value="AAA+_ATPase"/>
</dbReference>
<dbReference type="InterPro" id="IPR050168">
    <property type="entry name" value="AAA_ATPase_domain"/>
</dbReference>
<dbReference type="InterPro" id="IPR003959">
    <property type="entry name" value="ATPase_AAA_core"/>
</dbReference>
<dbReference type="InterPro" id="IPR003960">
    <property type="entry name" value="ATPase_AAA_CS"/>
</dbReference>
<dbReference type="InterPro" id="IPR012340">
    <property type="entry name" value="NA-bd_OB-fold"/>
</dbReference>
<dbReference type="InterPro" id="IPR027417">
    <property type="entry name" value="P-loop_NTPase"/>
</dbReference>
<dbReference type="InterPro" id="IPR032501">
    <property type="entry name" value="Prot_ATP_ID_OB_2nd"/>
</dbReference>
<dbReference type="InterPro" id="IPR041626">
    <property type="entry name" value="Prot_ATP_ID_OB_N"/>
</dbReference>
<dbReference type="InterPro" id="IPR022482">
    <property type="entry name" value="Proteasome_ATPase"/>
</dbReference>
<dbReference type="NCBIfam" id="TIGR03689">
    <property type="entry name" value="pup_AAA"/>
    <property type="match status" value="1"/>
</dbReference>
<dbReference type="PANTHER" id="PTHR23077">
    <property type="entry name" value="AAA-FAMILY ATPASE"/>
    <property type="match status" value="1"/>
</dbReference>
<dbReference type="PANTHER" id="PTHR23077:SF144">
    <property type="entry name" value="PROTEASOME-ASSOCIATED ATPASE"/>
    <property type="match status" value="1"/>
</dbReference>
<dbReference type="Pfam" id="PF00004">
    <property type="entry name" value="AAA"/>
    <property type="match status" value="1"/>
</dbReference>
<dbReference type="Pfam" id="PF16450">
    <property type="entry name" value="Prot_ATP_ID_OB_C"/>
    <property type="match status" value="1"/>
</dbReference>
<dbReference type="Pfam" id="PF17758">
    <property type="entry name" value="Prot_ATP_ID_OB_N"/>
    <property type="match status" value="1"/>
</dbReference>
<dbReference type="SMART" id="SM00382">
    <property type="entry name" value="AAA"/>
    <property type="match status" value="1"/>
</dbReference>
<dbReference type="SUPFAM" id="SSF52540">
    <property type="entry name" value="P-loop containing nucleoside triphosphate hydrolases"/>
    <property type="match status" value="1"/>
</dbReference>
<dbReference type="PROSITE" id="PS00674">
    <property type="entry name" value="AAA"/>
    <property type="match status" value="1"/>
</dbReference>
<protein>
    <recommendedName>
        <fullName evidence="1">Proteasome-associated ATPase</fullName>
    </recommendedName>
    <alternativeName>
        <fullName evidence="1">AAA ATPase forming ring-shaped complexes</fullName>
        <shortName evidence="1">ARC</shortName>
    </alternativeName>
    <alternativeName>
        <fullName evidence="1">Proteasomal ATPase</fullName>
    </alternativeName>
</protein>
<comment type="function">
    <text evidence="1">ATPase which is responsible for recognizing, binding, unfolding and translocation of pupylated proteins into the bacterial 20S proteasome core particle. May be essential for opening the gate of the 20S proteasome via an interaction with its C-terminus, thereby allowing substrate entry and access to the site of proteolysis. Thus, the C-termini of the proteasomal ATPase may function like a 'key in a lock' to induce gate opening and therefore regulate proteolysis.</text>
</comment>
<comment type="pathway">
    <text evidence="1">Protein degradation; proteasomal Pup-dependent pathway.</text>
</comment>
<comment type="subunit">
    <text evidence="1">Homohexamer. Assembles into a hexameric ring structure that caps the 20S proteasome core. Strongly interacts with the prokaryotic ubiquitin-like protein Pup through a hydrophobic interface; the interacting region of ARC lies in its N-terminal coiled-coil domain. There is one Pup binding site per ARC hexamer ring. Upon ATP-binding, the C-terminus of ARC interacts with the alpha-rings of the proteasome core, possibly by binding to the intersubunit pockets.</text>
</comment>
<comment type="domain">
    <text evidence="1">Consists of three main regions, an N-terminal coiled-coil domain that binds to protein Pup and functions as a docking station, an interdomain involved in ARC hexamerization, and a C-terminal ATPase domain of the AAA type.</text>
</comment>
<comment type="similarity">
    <text evidence="1">Belongs to the AAA ATPase family.</text>
</comment>
<reference key="1">
    <citation type="journal article" date="2006" name="Proc. Natl. Acad. Sci. U.S.A.">
        <title>The complete genome of Rhodococcus sp. RHA1 provides insights into a catabolic powerhouse.</title>
        <authorList>
            <person name="McLeod M.P."/>
            <person name="Warren R.L."/>
            <person name="Hsiao W.W.L."/>
            <person name="Araki N."/>
            <person name="Myhre M."/>
            <person name="Fernandes C."/>
            <person name="Miyazawa D."/>
            <person name="Wong W."/>
            <person name="Lillquist A.L."/>
            <person name="Wang D."/>
            <person name="Dosanjh M."/>
            <person name="Hara H."/>
            <person name="Petrescu A."/>
            <person name="Morin R.D."/>
            <person name="Yang G."/>
            <person name="Stott J.M."/>
            <person name="Schein J.E."/>
            <person name="Shin H."/>
            <person name="Smailus D."/>
            <person name="Siddiqui A.S."/>
            <person name="Marra M.A."/>
            <person name="Jones S.J.M."/>
            <person name="Holt R."/>
            <person name="Brinkman F.S.L."/>
            <person name="Miyauchi K."/>
            <person name="Fukuda M."/>
            <person name="Davies J.E."/>
            <person name="Mohn W.W."/>
            <person name="Eltis L.D."/>
        </authorList>
    </citation>
    <scope>NUCLEOTIDE SEQUENCE [LARGE SCALE GENOMIC DNA]</scope>
    <source>
        <strain>RHA1</strain>
    </source>
</reference>
<evidence type="ECO:0000255" key="1">
    <source>
        <dbReference type="HAMAP-Rule" id="MF_02112"/>
    </source>
</evidence>
<gene>
    <name evidence="1" type="primary">arc</name>
    <name type="ordered locus">RHA1_ro00849</name>
</gene>
<sequence>MSSTENPDSVAAARELEALRAEASALRRQLAESPEQLREMESRVDSLSIRNTKLMDTLKEARQQLIALREEVDRLGQPPSGYGVLLGVHDDQTVDVFTSGRKMRLTCSPNVDAETLKLGQTVRLNEALTIVEAGNFERVGEISTLREVLDDGQRALVVGHADEERIVWLAEPLATVYEDSERESIAYDAESPTRKLRPGDSLLVDTKAGYAFERIPKAEVEDLVLEEVPDVHYDDIGGLGRQIEQIRDAVELPFLHKDLFHEYELRPPKGVLLYGPPGCGKTLIAKAVANSLAKKIAEARGQDSKEAKSYFLNIKGPELLNKFVGETERHIRLIFQRAREKASEGTPVIVFFDEMDSIFRTRGSGVSSDVETTVVPQLLSEIDGVEGLENVIVIGASNREDMIDPAILRPGRLDVKIKIERPDAESAQDIFSKYLVETLPVHSDDIAEFGGDRTACIRVMIERVVDRMYAESEENRFLEVTYANGDKEVLYFKDFNSGAMIQNIVDRAKKYAIKSVLDTGAPGLRVQHLFDSIVDEFSENEDLPNTTNPDDWARISGKKGERIVYIRTLVTGKNASASRAIDTESNTGQYL</sequence>
<name>ARC_RHOJR</name>
<accession>Q0SIF4</accession>